<proteinExistence type="inferred from homology"/>
<sequence length="328" mass="35508">MAKHVKVAVTGAAGQIGYALLFRLASGQAFGLDTTVDLHLLEIEPALPALKGVVMELEDCAFPLLRNMVVTSDPRVAFNDVNWALLVGAAPRKAGMERKDLLEKNGSIFAGQGKAINENAASDVRIFVVGNPCNTNCLIAMNNAPDIPKDRFYAMTRLDQNRAIGQLALKAGVDVPSVKNMIIWGNHSSTQYPDFYHATIDGKPATEVIRDKNWLLNDFIPVIQQRGAAVIKARGASSAASAANAALDSVWSLINTTPADDNYSVALCAQGRYGVDEGLIFSFPCRTENGVVSVIEEIEHNEFGQQKLKETLDELREERDAVEALGLI</sequence>
<accession>B6IZN7</accession>
<comment type="function">
    <text evidence="1">Catalyzes the reversible oxidation of malate to oxaloacetate.</text>
</comment>
<comment type="catalytic activity">
    <reaction evidence="1">
        <text>(S)-malate + NAD(+) = oxaloacetate + NADH + H(+)</text>
        <dbReference type="Rhea" id="RHEA:21432"/>
        <dbReference type="ChEBI" id="CHEBI:15378"/>
        <dbReference type="ChEBI" id="CHEBI:15589"/>
        <dbReference type="ChEBI" id="CHEBI:16452"/>
        <dbReference type="ChEBI" id="CHEBI:57540"/>
        <dbReference type="ChEBI" id="CHEBI:57945"/>
        <dbReference type="EC" id="1.1.1.37"/>
    </reaction>
</comment>
<comment type="similarity">
    <text evidence="1">Belongs to the LDH/MDH superfamily. MDH type 2 family.</text>
</comment>
<keyword id="KW-0520">NAD</keyword>
<keyword id="KW-0560">Oxidoreductase</keyword>
<keyword id="KW-0816">Tricarboxylic acid cycle</keyword>
<protein>
    <recommendedName>
        <fullName evidence="1">Malate dehydrogenase</fullName>
        <ecNumber evidence="1">1.1.1.37</ecNumber>
    </recommendedName>
</protein>
<reference key="1">
    <citation type="journal article" date="2009" name="Infect. Immun.">
        <title>Comparative genomics reveal extensive transposon-mediated genomic plasticity and diversity among potential effector proteins within the genus Coxiella.</title>
        <authorList>
            <person name="Beare P.A."/>
            <person name="Unsworth N."/>
            <person name="Andoh M."/>
            <person name="Voth D.E."/>
            <person name="Omsland A."/>
            <person name="Gilk S.D."/>
            <person name="Williams K.P."/>
            <person name="Sobral B.W."/>
            <person name="Kupko J.J. III"/>
            <person name="Porcella S.F."/>
            <person name="Samuel J.E."/>
            <person name="Heinzen R.A."/>
        </authorList>
    </citation>
    <scope>NUCLEOTIDE SEQUENCE [LARGE SCALE GENOMIC DNA]</scope>
    <source>
        <strain>CbuG_Q212</strain>
    </source>
</reference>
<gene>
    <name evidence="1" type="primary">mdh</name>
    <name type="ordered locus">CbuG_0769</name>
</gene>
<dbReference type="EC" id="1.1.1.37" evidence="1"/>
<dbReference type="EMBL" id="CP001019">
    <property type="protein sequence ID" value="ACJ18165.1"/>
    <property type="molecule type" value="Genomic_DNA"/>
</dbReference>
<dbReference type="RefSeq" id="WP_012569925.1">
    <property type="nucleotide sequence ID" value="NC_011527.1"/>
</dbReference>
<dbReference type="SMR" id="B6IZN7"/>
<dbReference type="KEGG" id="cbg:CbuG_0769"/>
<dbReference type="HOGENOM" id="CLU_040727_2_0_6"/>
<dbReference type="GO" id="GO:0030060">
    <property type="term" value="F:L-malate dehydrogenase (NAD+) activity"/>
    <property type="evidence" value="ECO:0007669"/>
    <property type="project" value="UniProtKB-UniRule"/>
</dbReference>
<dbReference type="GO" id="GO:0006108">
    <property type="term" value="P:malate metabolic process"/>
    <property type="evidence" value="ECO:0007669"/>
    <property type="project" value="InterPro"/>
</dbReference>
<dbReference type="GO" id="GO:0006099">
    <property type="term" value="P:tricarboxylic acid cycle"/>
    <property type="evidence" value="ECO:0007669"/>
    <property type="project" value="UniProtKB-UniRule"/>
</dbReference>
<dbReference type="CDD" id="cd01338">
    <property type="entry name" value="MDH_chloroplast-like"/>
    <property type="match status" value="1"/>
</dbReference>
<dbReference type="FunFam" id="3.40.50.720:FF:000010">
    <property type="entry name" value="Malate dehydrogenase"/>
    <property type="match status" value="1"/>
</dbReference>
<dbReference type="FunFam" id="3.90.110.10:FF:000002">
    <property type="entry name" value="Malate dehydrogenase"/>
    <property type="match status" value="1"/>
</dbReference>
<dbReference type="Gene3D" id="3.90.110.10">
    <property type="entry name" value="Lactate dehydrogenase/glycoside hydrolase, family 4, C-terminal"/>
    <property type="match status" value="1"/>
</dbReference>
<dbReference type="Gene3D" id="3.40.50.720">
    <property type="entry name" value="NAD(P)-binding Rossmann-like Domain"/>
    <property type="match status" value="1"/>
</dbReference>
<dbReference type="HAMAP" id="MF_01517">
    <property type="entry name" value="Malate_dehydrog_2"/>
    <property type="match status" value="1"/>
</dbReference>
<dbReference type="InterPro" id="IPR001557">
    <property type="entry name" value="L-lactate/malate_DH"/>
</dbReference>
<dbReference type="InterPro" id="IPR022383">
    <property type="entry name" value="Lactate/malate_DH_C"/>
</dbReference>
<dbReference type="InterPro" id="IPR001236">
    <property type="entry name" value="Lactate/malate_DH_N"/>
</dbReference>
<dbReference type="InterPro" id="IPR015955">
    <property type="entry name" value="Lactate_DH/Glyco_Ohase_4_C"/>
</dbReference>
<dbReference type="InterPro" id="IPR001252">
    <property type="entry name" value="Malate_DH_AS"/>
</dbReference>
<dbReference type="InterPro" id="IPR010945">
    <property type="entry name" value="Malate_DH_type2"/>
</dbReference>
<dbReference type="InterPro" id="IPR036291">
    <property type="entry name" value="NAD(P)-bd_dom_sf"/>
</dbReference>
<dbReference type="NCBIfam" id="TIGR01759">
    <property type="entry name" value="MalateDH-SF1"/>
    <property type="match status" value="1"/>
</dbReference>
<dbReference type="NCBIfam" id="NF003916">
    <property type="entry name" value="PRK05442.1"/>
    <property type="match status" value="1"/>
</dbReference>
<dbReference type="PANTHER" id="PTHR23382">
    <property type="entry name" value="MALATE DEHYDROGENASE"/>
    <property type="match status" value="1"/>
</dbReference>
<dbReference type="Pfam" id="PF02866">
    <property type="entry name" value="Ldh_1_C"/>
    <property type="match status" value="1"/>
</dbReference>
<dbReference type="Pfam" id="PF00056">
    <property type="entry name" value="Ldh_1_N"/>
    <property type="match status" value="1"/>
</dbReference>
<dbReference type="PIRSF" id="PIRSF000102">
    <property type="entry name" value="Lac_mal_DH"/>
    <property type="match status" value="1"/>
</dbReference>
<dbReference type="SUPFAM" id="SSF56327">
    <property type="entry name" value="LDH C-terminal domain-like"/>
    <property type="match status" value="1"/>
</dbReference>
<dbReference type="SUPFAM" id="SSF51735">
    <property type="entry name" value="NAD(P)-binding Rossmann-fold domains"/>
    <property type="match status" value="1"/>
</dbReference>
<dbReference type="PROSITE" id="PS00068">
    <property type="entry name" value="MDH"/>
    <property type="match status" value="1"/>
</dbReference>
<name>MDH_COXB2</name>
<organism>
    <name type="scientific">Coxiella burnetii (strain CbuG_Q212)</name>
    <name type="common">Coxiella burnetii (strain Q212)</name>
    <dbReference type="NCBI Taxonomy" id="434923"/>
    <lineage>
        <taxon>Bacteria</taxon>
        <taxon>Pseudomonadati</taxon>
        <taxon>Pseudomonadota</taxon>
        <taxon>Gammaproteobacteria</taxon>
        <taxon>Legionellales</taxon>
        <taxon>Coxiellaceae</taxon>
        <taxon>Coxiella</taxon>
    </lineage>
</organism>
<feature type="chain" id="PRO_1000191618" description="Malate dehydrogenase">
    <location>
        <begin position="1"/>
        <end position="328"/>
    </location>
</feature>
<feature type="active site" description="Proton acceptor" evidence="1">
    <location>
        <position position="187"/>
    </location>
</feature>
<feature type="binding site" evidence="1">
    <location>
        <begin position="11"/>
        <end position="17"/>
    </location>
    <ligand>
        <name>NAD(+)</name>
        <dbReference type="ChEBI" id="CHEBI:57540"/>
    </ligand>
</feature>
<feature type="binding site" evidence="1">
    <location>
        <position position="92"/>
    </location>
    <ligand>
        <name>substrate</name>
    </ligand>
</feature>
<feature type="binding site" evidence="1">
    <location>
        <position position="98"/>
    </location>
    <ligand>
        <name>substrate</name>
    </ligand>
</feature>
<feature type="binding site" evidence="1">
    <location>
        <position position="105"/>
    </location>
    <ligand>
        <name>NAD(+)</name>
        <dbReference type="ChEBI" id="CHEBI:57540"/>
    </ligand>
</feature>
<feature type="binding site" evidence="1">
    <location>
        <position position="112"/>
    </location>
    <ligand>
        <name>NAD(+)</name>
        <dbReference type="ChEBI" id="CHEBI:57540"/>
    </ligand>
</feature>
<feature type="binding site" evidence="1">
    <location>
        <begin position="129"/>
        <end position="131"/>
    </location>
    <ligand>
        <name>NAD(+)</name>
        <dbReference type="ChEBI" id="CHEBI:57540"/>
    </ligand>
</feature>
<feature type="binding site" evidence="1">
    <location>
        <position position="131"/>
    </location>
    <ligand>
        <name>substrate</name>
    </ligand>
</feature>
<feature type="binding site" evidence="1">
    <location>
        <position position="162"/>
    </location>
    <ligand>
        <name>substrate</name>
    </ligand>
</feature>
<evidence type="ECO:0000255" key="1">
    <source>
        <dbReference type="HAMAP-Rule" id="MF_01517"/>
    </source>
</evidence>